<evidence type="ECO:0000255" key="1">
    <source>
        <dbReference type="HAMAP-Rule" id="MF_01803"/>
    </source>
</evidence>
<gene>
    <name evidence="1" type="primary">mukF</name>
    <name type="ordered locus">APJL_0572</name>
</gene>
<feature type="chain" id="PRO_1000187497" description="Chromosome partition protein MukF">
    <location>
        <begin position="1"/>
        <end position="443"/>
    </location>
</feature>
<feature type="region of interest" description="Leucine-zipper">
    <location>
        <begin position="209"/>
        <end position="237"/>
    </location>
</feature>
<keyword id="KW-0106">Calcium</keyword>
<keyword id="KW-0131">Cell cycle</keyword>
<keyword id="KW-0132">Cell division</keyword>
<keyword id="KW-0159">Chromosome partition</keyword>
<keyword id="KW-0963">Cytoplasm</keyword>
<keyword id="KW-0226">DNA condensation</keyword>
<name>MUKF_ACTPJ</name>
<protein>
    <recommendedName>
        <fullName evidence="1">Chromosome partition protein MukF</fullName>
    </recommendedName>
</protein>
<accession>B0BUD7</accession>
<dbReference type="EMBL" id="CP000687">
    <property type="protein sequence ID" value="ABY69142.1"/>
    <property type="molecule type" value="Genomic_DNA"/>
</dbReference>
<dbReference type="RefSeq" id="WP_012262864.1">
    <property type="nucleotide sequence ID" value="NC_010278.1"/>
</dbReference>
<dbReference type="SMR" id="B0BUD7"/>
<dbReference type="KEGG" id="apj:APJL_0572"/>
<dbReference type="HOGENOM" id="CLU_049853_0_0_6"/>
<dbReference type="Proteomes" id="UP000008547">
    <property type="component" value="Chromosome"/>
</dbReference>
<dbReference type="GO" id="GO:0005737">
    <property type="term" value="C:cytoplasm"/>
    <property type="evidence" value="ECO:0007669"/>
    <property type="project" value="UniProtKB-UniRule"/>
</dbReference>
<dbReference type="GO" id="GO:0009295">
    <property type="term" value="C:nucleoid"/>
    <property type="evidence" value="ECO:0007669"/>
    <property type="project" value="UniProtKB-SubCell"/>
</dbReference>
<dbReference type="GO" id="GO:0005509">
    <property type="term" value="F:calcium ion binding"/>
    <property type="evidence" value="ECO:0007669"/>
    <property type="project" value="UniProtKB-UniRule"/>
</dbReference>
<dbReference type="GO" id="GO:0051301">
    <property type="term" value="P:cell division"/>
    <property type="evidence" value="ECO:0007669"/>
    <property type="project" value="UniProtKB-KW"/>
</dbReference>
<dbReference type="GO" id="GO:0030261">
    <property type="term" value="P:chromosome condensation"/>
    <property type="evidence" value="ECO:0007669"/>
    <property type="project" value="UniProtKB-KW"/>
</dbReference>
<dbReference type="GO" id="GO:0007059">
    <property type="term" value="P:chromosome segregation"/>
    <property type="evidence" value="ECO:0007669"/>
    <property type="project" value="UniProtKB-UniRule"/>
</dbReference>
<dbReference type="GO" id="GO:0006260">
    <property type="term" value="P:DNA replication"/>
    <property type="evidence" value="ECO:0007669"/>
    <property type="project" value="UniProtKB-UniRule"/>
</dbReference>
<dbReference type="CDD" id="cd16337">
    <property type="entry name" value="MukF_C"/>
    <property type="match status" value="1"/>
</dbReference>
<dbReference type="Gene3D" id="1.20.58.590">
    <property type="entry name" value="Chromosome partition protein MukF, middle domain"/>
    <property type="match status" value="1"/>
</dbReference>
<dbReference type="Gene3D" id="1.10.225.40">
    <property type="entry name" value="MukF, C-terminal domain"/>
    <property type="match status" value="1"/>
</dbReference>
<dbReference type="Gene3D" id="1.10.10.10">
    <property type="entry name" value="Winged helix-like DNA-binding domain superfamily/Winged helix DNA-binding domain"/>
    <property type="match status" value="1"/>
</dbReference>
<dbReference type="HAMAP" id="MF_01803">
    <property type="entry name" value="MukF"/>
    <property type="match status" value="1"/>
</dbReference>
<dbReference type="InterPro" id="IPR005582">
    <property type="entry name" value="Chromosome_partition_MukF"/>
</dbReference>
<dbReference type="InterPro" id="IPR033441">
    <property type="entry name" value="MukF_C"/>
</dbReference>
<dbReference type="InterPro" id="IPR038198">
    <property type="entry name" value="MukF_C_sf"/>
</dbReference>
<dbReference type="InterPro" id="IPR033440">
    <property type="entry name" value="MukF_M"/>
</dbReference>
<dbReference type="InterPro" id="IPR036141">
    <property type="entry name" value="MukF_M_sp"/>
</dbReference>
<dbReference type="InterPro" id="IPR033439">
    <property type="entry name" value="MukF_WHTH"/>
</dbReference>
<dbReference type="InterPro" id="IPR036388">
    <property type="entry name" value="WH-like_DNA-bd_sf"/>
</dbReference>
<dbReference type="InterPro" id="IPR036390">
    <property type="entry name" value="WH_DNA-bd_sf"/>
</dbReference>
<dbReference type="NCBIfam" id="NF003615">
    <property type="entry name" value="PRK05260.1"/>
    <property type="match status" value="1"/>
</dbReference>
<dbReference type="Pfam" id="PF03882">
    <property type="entry name" value="KicB"/>
    <property type="match status" value="1"/>
</dbReference>
<dbReference type="Pfam" id="PF17193">
    <property type="entry name" value="MukF_C"/>
    <property type="match status" value="1"/>
</dbReference>
<dbReference type="Pfam" id="PF17192">
    <property type="entry name" value="MukF_M"/>
    <property type="match status" value="1"/>
</dbReference>
<dbReference type="PIRSF" id="PIRSF018282">
    <property type="entry name" value="MukF"/>
    <property type="match status" value="1"/>
</dbReference>
<dbReference type="SUPFAM" id="SSF140570">
    <property type="entry name" value="MukF C-terminal domain-like"/>
    <property type="match status" value="1"/>
</dbReference>
<dbReference type="SUPFAM" id="SSF46785">
    <property type="entry name" value="Winged helix' DNA-binding domain"/>
    <property type="match status" value="1"/>
</dbReference>
<proteinExistence type="inferred from homology"/>
<organism>
    <name type="scientific">Actinobacillus pleuropneumoniae serotype 3 (strain JL03)</name>
    <dbReference type="NCBI Taxonomy" id="434271"/>
    <lineage>
        <taxon>Bacteria</taxon>
        <taxon>Pseudomonadati</taxon>
        <taxon>Pseudomonadota</taxon>
        <taxon>Gammaproteobacteria</taxon>
        <taxon>Pasteurellales</taxon>
        <taxon>Pasteurellaceae</taxon>
        <taxon>Actinobacillus</taxon>
    </lineage>
</organism>
<comment type="function">
    <text evidence="1">Involved in chromosome condensation, segregation and cell cycle progression. May participate in facilitating chromosome segregation by condensation DNA from both sides of a centrally located replisome during cell division. Not required for mini-F plasmid partitioning. Probably acts via its interaction with MukB and MukE. Overexpression results in anucleate cells. It has a calcium binding activity.</text>
</comment>
<comment type="subunit">
    <text evidence="1">Interacts, and probably forms a ternary complex, with MukE and MukB via its C-terminal region. The complex formation is stimulated by calcium or magnesium. It is required for an interaction between MukE and MukB.</text>
</comment>
<comment type="subcellular location">
    <subcellularLocation>
        <location evidence="1">Cytoplasm</location>
        <location evidence="1">Nucleoid</location>
    </subcellularLocation>
    <text evidence="1">Restricted to the nucleoid region.</text>
</comment>
<comment type="similarity">
    <text evidence="1">Belongs to the MukF family.</text>
</comment>
<reference key="1">
    <citation type="journal article" date="2008" name="PLoS ONE">
        <title>Genome biology of Actinobacillus pleuropneumoniae JL03, an isolate of serotype 3 prevalent in China.</title>
        <authorList>
            <person name="Xu Z."/>
            <person name="Zhou Y."/>
            <person name="Li L."/>
            <person name="Zhou R."/>
            <person name="Xiao S."/>
            <person name="Wan Y."/>
            <person name="Zhang S."/>
            <person name="Wang K."/>
            <person name="Li W."/>
            <person name="Li L."/>
            <person name="Jin H."/>
            <person name="Kang M."/>
            <person name="Dalai B."/>
            <person name="Li T."/>
            <person name="Liu L."/>
            <person name="Cheng Y."/>
            <person name="Zhang L."/>
            <person name="Xu T."/>
            <person name="Zheng H."/>
            <person name="Pu S."/>
            <person name="Wang B."/>
            <person name="Gu W."/>
            <person name="Zhang X.L."/>
            <person name="Zhu G.-F."/>
            <person name="Wang S."/>
            <person name="Zhao G.-P."/>
            <person name="Chen H."/>
        </authorList>
    </citation>
    <scope>NUCLEOTIDE SEQUENCE [LARGE SCALE GENOMIC DNA]</scope>
    <source>
        <strain>JL03</strain>
    </source>
</reference>
<sequence>MQNELAQTIPELINWTKEREFSLSLSSDRLAFLLAISIYNNEQTDGELLESDLIDLFRYVSEVFDQSEATLTQRANNAINDLVKQRFLNRFSSEFTEGLAIYRITPLGVGVADYYVRQREFSTLRLSIQLSIVADEIQRASSAAEEGGDERFWRNNVFAPLKYSVAEIFDSIDLSQRMMDENQHQIRERIAELLSQNWHEAILSCEQLLDETSGNLRELQDTLNAAGDKLQAQLLRIQSCLIGRDDLDFVDQLIVNLQNKLDRIISWGQQAIDLWIGYDRHVHKFIRTAIDMDKNRVFGQHLRQSIQDYFNAPWLLYTAKAESLLDLRDDETMLNEAEAVGELPSELEYESLSDVQEQIISVMQAHLAPFRAEGKPIDLGAVLREQLALYPQSRHFDVARIIVDQAVKLGMASLDSQAVYPEWQAINDNGAEVQANVIDQYNK</sequence>